<reference key="1">
    <citation type="journal article" date="2009" name="Stand. Genomic Sci.">
        <title>Complete genome sequence of Jonesia denitrificans type strain (Prevot 55134).</title>
        <authorList>
            <person name="Pukall R."/>
            <person name="Gehrich-Schroter G."/>
            <person name="Lapidus A."/>
            <person name="Nolan M."/>
            <person name="Glavina Del Rio T."/>
            <person name="Lucas S."/>
            <person name="Chen F."/>
            <person name="Tice H."/>
            <person name="Pitluck S."/>
            <person name="Cheng J.F."/>
            <person name="Copeland A."/>
            <person name="Saunders E."/>
            <person name="Brettin T."/>
            <person name="Detter J.C."/>
            <person name="Bruce D."/>
            <person name="Goodwin L."/>
            <person name="Pati A."/>
            <person name="Ivanova N."/>
            <person name="Mavromatis K."/>
            <person name="Ovchinnikova G."/>
            <person name="Chen A."/>
            <person name="Palaniappan K."/>
            <person name="Land M."/>
            <person name="Hauser L."/>
            <person name="Chang Y.J."/>
            <person name="Jeffries C.D."/>
            <person name="Chain P."/>
            <person name="Goker M."/>
            <person name="Bristow J."/>
            <person name="Eisen J.A."/>
            <person name="Markowitz V."/>
            <person name="Hugenholtz P."/>
            <person name="Kyrpides N.C."/>
            <person name="Klenk H.P."/>
            <person name="Han C."/>
        </authorList>
    </citation>
    <scope>NUCLEOTIDE SEQUENCE [LARGE SCALE GENOMIC DNA]</scope>
    <source>
        <strain>ATCC 14870 / DSM 20603 / BCRC 15368 / CIP 55.134 / JCM 11481 / NBRC 15587 / NCTC 10816 / Prevot 55134</strain>
    </source>
</reference>
<feature type="chain" id="PRO_0000400260" description="Mycothiol acetyltransferase">
    <location>
        <begin position="1"/>
        <end position="314"/>
    </location>
</feature>
<feature type="domain" description="N-acetyltransferase" evidence="1">
    <location>
        <begin position="159"/>
        <end position="313"/>
    </location>
</feature>
<feature type="binding site" evidence="1">
    <location>
        <position position="39"/>
    </location>
    <ligand>
        <name>1D-myo-inositol 2-(L-cysteinylamino)-2-deoxy-alpha-D-glucopyranoside</name>
        <dbReference type="ChEBI" id="CHEBI:58887"/>
    </ligand>
</feature>
<feature type="binding site" evidence="1">
    <location>
        <begin position="80"/>
        <end position="82"/>
    </location>
    <ligand>
        <name>acetyl-CoA</name>
        <dbReference type="ChEBI" id="CHEBI:57288"/>
        <label>1</label>
    </ligand>
</feature>
<feature type="binding site" evidence="1">
    <location>
        <position position="186"/>
    </location>
    <ligand>
        <name>1D-myo-inositol 2-(L-cysteinylamino)-2-deoxy-alpha-D-glucopyranoside</name>
        <dbReference type="ChEBI" id="CHEBI:58887"/>
    </ligand>
</feature>
<feature type="binding site" evidence="1">
    <location>
        <position position="228"/>
    </location>
    <ligand>
        <name>1D-myo-inositol 2-(L-cysteinylamino)-2-deoxy-alpha-D-glucopyranoside</name>
        <dbReference type="ChEBI" id="CHEBI:58887"/>
    </ligand>
</feature>
<feature type="binding site" evidence="1">
    <location>
        <position position="237"/>
    </location>
    <ligand>
        <name>1D-myo-inositol 2-(L-cysteinylamino)-2-deoxy-alpha-D-glucopyranoside</name>
        <dbReference type="ChEBI" id="CHEBI:58887"/>
    </ligand>
</feature>
<feature type="binding site" evidence="1">
    <location>
        <begin position="241"/>
        <end position="243"/>
    </location>
    <ligand>
        <name>acetyl-CoA</name>
        <dbReference type="ChEBI" id="CHEBI:57288"/>
        <label>2</label>
    </ligand>
</feature>
<feature type="binding site" evidence="1">
    <location>
        <begin position="248"/>
        <end position="254"/>
    </location>
    <ligand>
        <name>acetyl-CoA</name>
        <dbReference type="ChEBI" id="CHEBI:57288"/>
        <label>2</label>
    </ligand>
</feature>
<feature type="binding site" evidence="1">
    <location>
        <position position="275"/>
    </location>
    <ligand>
        <name>1D-myo-inositol 2-(L-cysteinylamino)-2-deoxy-alpha-D-glucopyranoside</name>
        <dbReference type="ChEBI" id="CHEBI:58887"/>
    </ligand>
</feature>
<evidence type="ECO:0000255" key="1">
    <source>
        <dbReference type="HAMAP-Rule" id="MF_01698"/>
    </source>
</evidence>
<proteinExistence type="inferred from homology"/>
<dbReference type="EC" id="2.3.1.189" evidence="1"/>
<dbReference type="EMBL" id="CP001706">
    <property type="protein sequence ID" value="ACV09871.1"/>
    <property type="molecule type" value="Genomic_DNA"/>
</dbReference>
<dbReference type="RefSeq" id="WP_015772499.1">
    <property type="nucleotide sequence ID" value="NC_013174.1"/>
</dbReference>
<dbReference type="SMR" id="C7R1N6"/>
<dbReference type="STRING" id="471856.Jden_2234"/>
<dbReference type="KEGG" id="jde:Jden_2234"/>
<dbReference type="eggNOG" id="COG0456">
    <property type="taxonomic scope" value="Bacteria"/>
</dbReference>
<dbReference type="HOGENOM" id="CLU_068014_0_0_11"/>
<dbReference type="OrthoDB" id="3208058at2"/>
<dbReference type="Proteomes" id="UP000000628">
    <property type="component" value="Chromosome"/>
</dbReference>
<dbReference type="GO" id="GO:0035447">
    <property type="term" value="F:mycothiol synthase activity"/>
    <property type="evidence" value="ECO:0007669"/>
    <property type="project" value="UniProtKB-UniRule"/>
</dbReference>
<dbReference type="GO" id="GO:0010125">
    <property type="term" value="P:mycothiol biosynthetic process"/>
    <property type="evidence" value="ECO:0007669"/>
    <property type="project" value="UniProtKB-UniRule"/>
</dbReference>
<dbReference type="CDD" id="cd04301">
    <property type="entry name" value="NAT_SF"/>
    <property type="match status" value="1"/>
</dbReference>
<dbReference type="Gene3D" id="3.40.630.30">
    <property type="match status" value="1"/>
</dbReference>
<dbReference type="HAMAP" id="MF_01698">
    <property type="entry name" value="MshD"/>
    <property type="match status" value="1"/>
</dbReference>
<dbReference type="InterPro" id="IPR016181">
    <property type="entry name" value="Acyl_CoA_acyltransferase"/>
</dbReference>
<dbReference type="InterPro" id="IPR050832">
    <property type="entry name" value="Bact_Acetyltransf"/>
</dbReference>
<dbReference type="InterPro" id="IPR000182">
    <property type="entry name" value="GNAT_dom"/>
</dbReference>
<dbReference type="InterPro" id="IPR017813">
    <property type="entry name" value="Mycothiol_AcTrfase"/>
</dbReference>
<dbReference type="NCBIfam" id="TIGR03448">
    <property type="entry name" value="mycothiol_MshD"/>
    <property type="match status" value="1"/>
</dbReference>
<dbReference type="PANTHER" id="PTHR43877:SF2">
    <property type="entry name" value="AMINOALKYLPHOSPHONATE N-ACETYLTRANSFERASE-RELATED"/>
    <property type="match status" value="1"/>
</dbReference>
<dbReference type="PANTHER" id="PTHR43877">
    <property type="entry name" value="AMINOALKYLPHOSPHONATE N-ACETYLTRANSFERASE-RELATED-RELATED"/>
    <property type="match status" value="1"/>
</dbReference>
<dbReference type="Pfam" id="PF00583">
    <property type="entry name" value="Acetyltransf_1"/>
    <property type="match status" value="1"/>
</dbReference>
<dbReference type="SUPFAM" id="SSF55729">
    <property type="entry name" value="Acyl-CoA N-acyltransferases (Nat)"/>
    <property type="match status" value="1"/>
</dbReference>
<dbReference type="PROSITE" id="PS51186">
    <property type="entry name" value="GNAT"/>
    <property type="match status" value="1"/>
</dbReference>
<organism>
    <name type="scientific">Jonesia denitrificans (strain ATCC 14870 / DSM 20603 / BCRC 15368 / CIP 55.134 / JCM 11481 / NBRC 15587 / NCTC 10816 / Prevot 55134)</name>
    <name type="common">Listeria denitrificans</name>
    <dbReference type="NCBI Taxonomy" id="471856"/>
    <lineage>
        <taxon>Bacteria</taxon>
        <taxon>Bacillati</taxon>
        <taxon>Actinomycetota</taxon>
        <taxon>Actinomycetes</taxon>
        <taxon>Micrococcales</taxon>
        <taxon>Jonesiaceae</taxon>
        <taxon>Jonesia</taxon>
    </lineage>
</organism>
<keyword id="KW-0012">Acyltransferase</keyword>
<keyword id="KW-1185">Reference proteome</keyword>
<keyword id="KW-0677">Repeat</keyword>
<keyword id="KW-0808">Transferase</keyword>
<accession>C7R1N6</accession>
<gene>
    <name evidence="1" type="primary">mshD</name>
    <name type="ordered locus">Jden_2234</name>
</gene>
<sequence>MTTVLLTSTSGPLSDDAARSVRELVALETERLGVPPLSEQPLLNLRDPRARVVHIMDTQGGDVTGYAQLDVSREGGSLELTARCADRTQCVGALLNEAELIAQDHDVVVRPWVHGDDPDVTRVLAQRGYVPARTLLVLSRDLSLADTQALATPVVPEGFVCRRFDPISDADSLLAANSDAFSWHPEQGRLTHHDLSMRMKEPWFTPDHLHVVTPVSESARIVGFVWLKAEPHSRSIELYVLGVTEAAQGQGVGRFLTELATVTALNQGYPRLHLYVEADNTRALALYTQHGFAPMERHVNFTQPTGELGHEPPS</sequence>
<name>MSHD_JONDD</name>
<protein>
    <recommendedName>
        <fullName evidence="1">Mycothiol acetyltransferase</fullName>
        <shortName evidence="1">MSH acetyltransferase</shortName>
        <ecNumber evidence="1">2.3.1.189</ecNumber>
    </recommendedName>
    <alternativeName>
        <fullName evidence="1">Mycothiol synthase</fullName>
    </alternativeName>
</protein>
<comment type="function">
    <text evidence="1">Catalyzes the transfer of acetyl from acetyl-CoA to desacetylmycothiol (Cys-GlcN-Ins) to form mycothiol.</text>
</comment>
<comment type="catalytic activity">
    <reaction evidence="1">
        <text>1D-myo-inositol 2-(L-cysteinylamino)-2-deoxy-alpha-D-glucopyranoside + acetyl-CoA = mycothiol + CoA + H(+)</text>
        <dbReference type="Rhea" id="RHEA:26172"/>
        <dbReference type="ChEBI" id="CHEBI:15378"/>
        <dbReference type="ChEBI" id="CHEBI:16768"/>
        <dbReference type="ChEBI" id="CHEBI:57287"/>
        <dbReference type="ChEBI" id="CHEBI:57288"/>
        <dbReference type="ChEBI" id="CHEBI:58887"/>
        <dbReference type="EC" id="2.3.1.189"/>
    </reaction>
</comment>
<comment type="subunit">
    <text evidence="1">Monomer.</text>
</comment>
<comment type="similarity">
    <text evidence="1">Belongs to the acetyltransferase family. MshD subfamily.</text>
</comment>